<proteinExistence type="evidence at transcript level"/>
<keyword id="KW-0472">Membrane</keyword>
<keyword id="KW-0496">Mitochondrion</keyword>
<keyword id="KW-0999">Mitochondrion inner membrane</keyword>
<keyword id="KW-1185">Reference proteome</keyword>
<keyword id="KW-0677">Repeat</keyword>
<keyword id="KW-0812">Transmembrane</keyword>
<keyword id="KW-1133">Transmembrane helix</keyword>
<keyword id="KW-0813">Transport</keyword>
<protein>
    <recommendedName>
        <fullName>Solute carrier family 25 member 43</fullName>
    </recommendedName>
</protein>
<dbReference type="EMBL" id="AL450397">
    <property type="status" value="NOT_ANNOTATED_CDS"/>
    <property type="molecule type" value="Genomic_DNA"/>
</dbReference>
<dbReference type="EMBL" id="BC147709">
    <property type="protein sequence ID" value="AAI47710.1"/>
    <property type="molecule type" value="mRNA"/>
</dbReference>
<dbReference type="EMBL" id="BC147717">
    <property type="protein sequence ID" value="AAI47718.1"/>
    <property type="molecule type" value="mRNA"/>
</dbReference>
<dbReference type="CCDS" id="CCDS40925.1"/>
<dbReference type="RefSeq" id="NP_001078966.1">
    <property type="nucleotide sequence ID" value="NM_001085497.2"/>
</dbReference>
<dbReference type="SMR" id="A2A3V2"/>
<dbReference type="FunCoup" id="A2A3V2">
    <property type="interactions" value="373"/>
</dbReference>
<dbReference type="STRING" id="10090.ENSMUSP00000035392"/>
<dbReference type="iPTMnet" id="A2A3V2"/>
<dbReference type="PhosphoSitePlus" id="A2A3V2"/>
<dbReference type="PaxDb" id="10090-ENSMUSP00000035392"/>
<dbReference type="ProteomicsDB" id="260764"/>
<dbReference type="Antibodypedia" id="29773">
    <property type="antibodies" value="18 antibodies from 11 providers"/>
</dbReference>
<dbReference type="Ensembl" id="ENSMUST00000047655.7">
    <property type="protein sequence ID" value="ENSMUSP00000035392.7"/>
    <property type="gene ID" value="ENSMUSG00000037636.7"/>
</dbReference>
<dbReference type="GeneID" id="194744"/>
<dbReference type="KEGG" id="mmu:194744"/>
<dbReference type="UCSC" id="uc009sxr.2">
    <property type="organism name" value="mouse"/>
</dbReference>
<dbReference type="AGR" id="MGI:2684854"/>
<dbReference type="CTD" id="203427"/>
<dbReference type="MGI" id="MGI:2684854">
    <property type="gene designation" value="Slc25a43"/>
</dbReference>
<dbReference type="VEuPathDB" id="HostDB:ENSMUSG00000037636"/>
<dbReference type="eggNOG" id="KOG0752">
    <property type="taxonomic scope" value="Eukaryota"/>
</dbReference>
<dbReference type="GeneTree" id="ENSGT00940000160686"/>
<dbReference type="HOGENOM" id="CLU_015166_10_3_1"/>
<dbReference type="InParanoid" id="A2A3V2"/>
<dbReference type="OMA" id="QSFMCVG"/>
<dbReference type="OrthoDB" id="270584at2759"/>
<dbReference type="PhylomeDB" id="A2A3V2"/>
<dbReference type="TreeFam" id="TF354298"/>
<dbReference type="BioGRID-ORCS" id="194744">
    <property type="hits" value="2 hits in 76 CRISPR screens"/>
</dbReference>
<dbReference type="PRO" id="PR:A2A3V2"/>
<dbReference type="Proteomes" id="UP000000589">
    <property type="component" value="Chromosome X"/>
</dbReference>
<dbReference type="RNAct" id="A2A3V2">
    <property type="molecule type" value="protein"/>
</dbReference>
<dbReference type="Bgee" id="ENSMUSG00000037636">
    <property type="expression patterns" value="Expressed in yolk sac and 57 other cell types or tissues"/>
</dbReference>
<dbReference type="GO" id="GO:0005743">
    <property type="term" value="C:mitochondrial inner membrane"/>
    <property type="evidence" value="ECO:0007669"/>
    <property type="project" value="UniProtKB-SubCell"/>
</dbReference>
<dbReference type="GO" id="GO:0005739">
    <property type="term" value="C:mitochondrion"/>
    <property type="evidence" value="ECO:0007005"/>
    <property type="project" value="MGI"/>
</dbReference>
<dbReference type="GO" id="GO:0055085">
    <property type="term" value="P:transmembrane transport"/>
    <property type="evidence" value="ECO:0007669"/>
    <property type="project" value="InterPro"/>
</dbReference>
<dbReference type="FunFam" id="1.50.40.10:FF:000098">
    <property type="entry name" value="Mitochondrial substrate carrier family protein"/>
    <property type="match status" value="1"/>
</dbReference>
<dbReference type="Gene3D" id="1.50.40.10">
    <property type="entry name" value="Mitochondrial carrier domain"/>
    <property type="match status" value="1"/>
</dbReference>
<dbReference type="InterPro" id="IPR002067">
    <property type="entry name" value="Mit_carrier"/>
</dbReference>
<dbReference type="InterPro" id="IPR018108">
    <property type="entry name" value="Mitochondrial_sb/sol_carrier"/>
</dbReference>
<dbReference type="InterPro" id="IPR023395">
    <property type="entry name" value="Mt_carrier_dom_sf"/>
</dbReference>
<dbReference type="PANTHER" id="PTHR24089">
    <property type="entry name" value="SOLUTE CARRIER FAMILY 25"/>
    <property type="match status" value="1"/>
</dbReference>
<dbReference type="Pfam" id="PF00153">
    <property type="entry name" value="Mito_carr"/>
    <property type="match status" value="3"/>
</dbReference>
<dbReference type="PRINTS" id="PR00926">
    <property type="entry name" value="MITOCARRIER"/>
</dbReference>
<dbReference type="SUPFAM" id="SSF103506">
    <property type="entry name" value="Mitochondrial carrier"/>
    <property type="match status" value="1"/>
</dbReference>
<dbReference type="PROSITE" id="PS50920">
    <property type="entry name" value="SOLCAR"/>
    <property type="match status" value="3"/>
</dbReference>
<accession>A2A3V2</accession>
<accession>B2RWC0</accession>
<comment type="subcellular location">
    <subcellularLocation>
        <location evidence="1">Mitochondrion inner membrane</location>
        <topology evidence="1">Multi-pass membrane protein</topology>
    </subcellularLocation>
</comment>
<comment type="similarity">
    <text evidence="3">Belongs to the mitochondrial carrier (TC 2.A.29) family.</text>
</comment>
<name>S2543_MOUSE</name>
<sequence length="341" mass="38064">MATWRRDGRLTGSQRLLCAGLAGAFSLSLTAPLELATVLAQVGKVQSHSLGLWATGRRVWLSEGPRALWKGNGVACLRLFPCSMVQLAAYRKFVVLFMDDLGRISQWSSIVTGSLAGMVSTIVTYPTDLIKTRLMVQNVLEPSYRGLIHAFSTIYQQEGFLALYRGVSLTVLGAVPFSAGSLLVYMNLEKVWNGPRDRFSHLQNFANVCVAAAVSQTLSFPFDTVKRKMQAQSPYLPHYGGVDVHFSGAADCFRQIVKTQGVLGLWNGLTANLLKVVPYFGVMFSMFEFCKRIFLYQNGYTLSPLTYKLTPGVDQSLKPQELRELKKFFKRRKLHSKTPPW</sequence>
<organism>
    <name type="scientific">Mus musculus</name>
    <name type="common">Mouse</name>
    <dbReference type="NCBI Taxonomy" id="10090"/>
    <lineage>
        <taxon>Eukaryota</taxon>
        <taxon>Metazoa</taxon>
        <taxon>Chordata</taxon>
        <taxon>Craniata</taxon>
        <taxon>Vertebrata</taxon>
        <taxon>Euteleostomi</taxon>
        <taxon>Mammalia</taxon>
        <taxon>Eutheria</taxon>
        <taxon>Euarchontoglires</taxon>
        <taxon>Glires</taxon>
        <taxon>Rodentia</taxon>
        <taxon>Myomorpha</taxon>
        <taxon>Muroidea</taxon>
        <taxon>Muridae</taxon>
        <taxon>Murinae</taxon>
        <taxon>Mus</taxon>
        <taxon>Mus</taxon>
    </lineage>
</organism>
<gene>
    <name type="primary">Slc25a43</name>
    <name type="synonym">Gm8</name>
</gene>
<feature type="chain" id="PRO_0000291824" description="Solute carrier family 25 member 43">
    <location>
        <begin position="1"/>
        <end position="341"/>
    </location>
</feature>
<feature type="transmembrane region" description="Helical; Name=1" evidence="2">
    <location>
        <begin position="16"/>
        <end position="36"/>
    </location>
</feature>
<feature type="transmembrane region" description="Helical; Name=2" evidence="2">
    <location>
        <begin position="68"/>
        <end position="88"/>
    </location>
</feature>
<feature type="transmembrane region" description="Helical; Name=3" evidence="2">
    <location>
        <begin position="110"/>
        <end position="130"/>
    </location>
</feature>
<feature type="transmembrane region" description="Helical; Name=4" evidence="2">
    <location>
        <begin position="166"/>
        <end position="186"/>
    </location>
</feature>
<feature type="transmembrane region" description="Helical; Name=5" evidence="2">
    <location>
        <begin position="205"/>
        <end position="225"/>
    </location>
</feature>
<feature type="transmembrane region" description="Helical; Name=6" evidence="2">
    <location>
        <begin position="262"/>
        <end position="282"/>
    </location>
</feature>
<feature type="repeat" description="Solcar 1">
    <location>
        <begin position="11"/>
        <end position="101"/>
    </location>
</feature>
<feature type="repeat" description="Solcar 2">
    <location>
        <begin position="105"/>
        <end position="185"/>
    </location>
</feature>
<feature type="repeat" description="Solcar 3">
    <location>
        <begin position="200"/>
        <end position="298"/>
    </location>
</feature>
<reference key="1">
    <citation type="journal article" date="2009" name="PLoS Biol.">
        <title>Lineage-specific biology revealed by a finished genome assembly of the mouse.</title>
        <authorList>
            <person name="Church D.M."/>
            <person name="Goodstadt L."/>
            <person name="Hillier L.W."/>
            <person name="Zody M.C."/>
            <person name="Goldstein S."/>
            <person name="She X."/>
            <person name="Bult C.J."/>
            <person name="Agarwala R."/>
            <person name="Cherry J.L."/>
            <person name="DiCuccio M."/>
            <person name="Hlavina W."/>
            <person name="Kapustin Y."/>
            <person name="Meric P."/>
            <person name="Maglott D."/>
            <person name="Birtle Z."/>
            <person name="Marques A.C."/>
            <person name="Graves T."/>
            <person name="Zhou S."/>
            <person name="Teague B."/>
            <person name="Potamousis K."/>
            <person name="Churas C."/>
            <person name="Place M."/>
            <person name="Herschleb J."/>
            <person name="Runnheim R."/>
            <person name="Forrest D."/>
            <person name="Amos-Landgraf J."/>
            <person name="Schwartz D.C."/>
            <person name="Cheng Z."/>
            <person name="Lindblad-Toh K."/>
            <person name="Eichler E.E."/>
            <person name="Ponting C.P."/>
        </authorList>
    </citation>
    <scope>NUCLEOTIDE SEQUENCE [LARGE SCALE GENOMIC DNA]</scope>
    <source>
        <strain>C57BL/6J</strain>
    </source>
</reference>
<reference key="2">
    <citation type="journal article" date="2004" name="Genome Res.">
        <title>The status, quality, and expansion of the NIH full-length cDNA project: the Mammalian Gene Collection (MGC).</title>
        <authorList>
            <consortium name="The MGC Project Team"/>
        </authorList>
    </citation>
    <scope>NUCLEOTIDE SEQUENCE [LARGE SCALE MRNA]</scope>
    <source>
        <tissue>Brain</tissue>
    </source>
</reference>
<evidence type="ECO:0000250" key="1"/>
<evidence type="ECO:0000255" key="2"/>
<evidence type="ECO:0000305" key="3"/>